<reference key="1">
    <citation type="journal article" date="1991" name="Mol. Microbiol.">
        <title>Organization of the genes coding for the reaction-centre L and M subunits and B870 antenna polypeptides alpha and beta from the aerobic photosynthetic bacterium Erythrobacter species OCH114.</title>
        <authorList>
            <person name="Liebetanz R."/>
            <person name="Hornberger U."/>
            <person name="Drews G."/>
        </authorList>
    </citation>
    <scope>NUCLEOTIDE SEQUENCE [GENOMIC DNA]</scope>
</reference>
<reference key="2">
    <citation type="journal article" date="2007" name="J. Bacteriol.">
        <title>The complete genome sequence of Roseobacter denitrificans reveals a mixotrophic rather than photosynthetic metabolism.</title>
        <authorList>
            <person name="Swingley W.D."/>
            <person name="Sadekar S."/>
            <person name="Mastrian S.D."/>
            <person name="Matthies H.J."/>
            <person name="Hao J."/>
            <person name="Ramos H."/>
            <person name="Acharya C.R."/>
            <person name="Conrad A.L."/>
            <person name="Taylor H.L."/>
            <person name="Dejesa L.C."/>
            <person name="Shah M.K."/>
            <person name="O'Huallachain M.E."/>
            <person name="Lince M.T."/>
            <person name="Blankenship R.E."/>
            <person name="Beatty J.T."/>
            <person name="Touchman J.W."/>
        </authorList>
    </citation>
    <scope>NUCLEOTIDE SEQUENCE [LARGE SCALE GENOMIC DNA]</scope>
    <source>
        <strain>ATCC 33942 / OCh 114</strain>
    </source>
</reference>
<evidence type="ECO:0000250" key="1"/>
<evidence type="ECO:0000305" key="2"/>
<protein>
    <recommendedName>
        <fullName>Reaction center protein L chain</fullName>
    </recommendedName>
    <alternativeName>
        <fullName>Photosynthetic reaction center L subunit</fullName>
    </alternativeName>
</protein>
<gene>
    <name type="primary">pufL</name>
    <name type="ordered locus">RD1_0104</name>
</gene>
<keyword id="KW-0076">Bacteriochlorophyll</keyword>
<keyword id="KW-0148">Chlorophyll</keyword>
<keyword id="KW-0157">Chromophore</keyword>
<keyword id="KW-0249">Electron transport</keyword>
<keyword id="KW-0408">Iron</keyword>
<keyword id="KW-0460">Magnesium</keyword>
<keyword id="KW-0472">Membrane</keyword>
<keyword id="KW-0479">Metal-binding</keyword>
<keyword id="KW-0602">Photosynthesis</keyword>
<keyword id="KW-0674">Reaction center</keyword>
<keyword id="KW-1185">Reference proteome</keyword>
<keyword id="KW-0812">Transmembrane</keyword>
<keyword id="KW-1133">Transmembrane helix</keyword>
<keyword id="KW-0813">Transport</keyword>
<accession>P26280</accession>
<accession>Q16DV4</accession>
<proteinExistence type="inferred from homology"/>
<sequence>MALLSFERKYRVRGGTLVGGDLFDFWVGPFYVGFFGVTTAFFALLGTILIFWGASQQGTFNPWLINIAPPDLSYGLGLAPLLEGGLWQIITICATGAFISWALREVEICRKLGMGYHVPFGFAAAIIAYMTLVIFRPLLMGAWGHGFPYGIFSHLDWVSNVGYAYLHFHYNPAHMLAVTLFFTTTLALALHGGLILSACNPEKGEEAKTPDHEDTFFRDFIGYSVGTLGIHRLGYLLAINAGLWSAICIIISGPVWTAGWPEWWNWWLDMPIWGEPIAVIGGM</sequence>
<organism>
    <name type="scientific">Roseobacter denitrificans (strain ATCC 33942 / OCh 114)</name>
    <name type="common">Erythrobacter sp. (strain OCh 114)</name>
    <name type="synonym">Roseobacter denitrificans</name>
    <dbReference type="NCBI Taxonomy" id="375451"/>
    <lineage>
        <taxon>Bacteria</taxon>
        <taxon>Pseudomonadati</taxon>
        <taxon>Pseudomonadota</taxon>
        <taxon>Alphaproteobacteria</taxon>
        <taxon>Rhodobacterales</taxon>
        <taxon>Roseobacteraceae</taxon>
        <taxon>Roseobacter</taxon>
    </lineage>
</organism>
<comment type="function">
    <text>The reaction center is a membrane-bound complex that mediates the initial photochemical event in the electron transfer process of photosynthesis.</text>
</comment>
<comment type="subunit">
    <text>Reaction center is composed of four bacteriochlorophylls, two bacteriopheophytins, two ubiquinones, one iron, and three highly hydrophobic polypeptide chains (designated L, M, and H).</text>
</comment>
<comment type="subcellular location">
    <subcellularLocation>
        <location evidence="1">Cellular chromatophore membrane</location>
        <topology evidence="1">Multi-pass membrane protein</topology>
    </subcellularLocation>
</comment>
<comment type="similarity">
    <text evidence="2">Belongs to the reaction center PufL/M/PsbA/D family.</text>
</comment>
<dbReference type="EMBL" id="X57597">
    <property type="protein sequence ID" value="CAA40818.1"/>
    <property type="molecule type" value="Genomic_DNA"/>
</dbReference>
<dbReference type="EMBL" id="CP000362">
    <property type="protein sequence ID" value="ABG29839.1"/>
    <property type="molecule type" value="Genomic_DNA"/>
</dbReference>
<dbReference type="RefSeq" id="WP_011566461.1">
    <property type="nucleotide sequence ID" value="NC_008209.1"/>
</dbReference>
<dbReference type="SMR" id="P26280"/>
<dbReference type="STRING" id="375451.RD1_0104"/>
<dbReference type="KEGG" id="rde:RD1_0104"/>
<dbReference type="eggNOG" id="ENOG502Z7K3">
    <property type="taxonomic scope" value="Bacteria"/>
</dbReference>
<dbReference type="HOGENOM" id="CLU_078782_0_0_5"/>
<dbReference type="OrthoDB" id="8555181at2"/>
<dbReference type="Proteomes" id="UP000007029">
    <property type="component" value="Chromosome"/>
</dbReference>
<dbReference type="GO" id="GO:0030077">
    <property type="term" value="C:plasma membrane light-harvesting complex"/>
    <property type="evidence" value="ECO:0007669"/>
    <property type="project" value="InterPro"/>
</dbReference>
<dbReference type="GO" id="GO:0042717">
    <property type="term" value="C:plasma membrane-derived chromatophore membrane"/>
    <property type="evidence" value="ECO:0007669"/>
    <property type="project" value="UniProtKB-SubCell"/>
</dbReference>
<dbReference type="GO" id="GO:0042314">
    <property type="term" value="F:bacteriochlorophyll binding"/>
    <property type="evidence" value="ECO:0007669"/>
    <property type="project" value="UniProtKB-KW"/>
</dbReference>
<dbReference type="GO" id="GO:0045156">
    <property type="term" value="F:electron transporter, transferring electrons within the cyclic electron transport pathway of photosynthesis activity"/>
    <property type="evidence" value="ECO:0007669"/>
    <property type="project" value="InterPro"/>
</dbReference>
<dbReference type="GO" id="GO:0046872">
    <property type="term" value="F:metal ion binding"/>
    <property type="evidence" value="ECO:0007669"/>
    <property type="project" value="UniProtKB-KW"/>
</dbReference>
<dbReference type="GO" id="GO:0009772">
    <property type="term" value="P:photosynthetic electron transport in photosystem II"/>
    <property type="evidence" value="ECO:0007669"/>
    <property type="project" value="InterPro"/>
</dbReference>
<dbReference type="CDD" id="cd09290">
    <property type="entry name" value="Photo-RC_L"/>
    <property type="match status" value="1"/>
</dbReference>
<dbReference type="Gene3D" id="1.20.85.10">
    <property type="entry name" value="Photosystem II protein D1-like"/>
    <property type="match status" value="2"/>
</dbReference>
<dbReference type="InterPro" id="IPR036854">
    <property type="entry name" value="Photo_II_D1/D2_sf"/>
</dbReference>
<dbReference type="InterPro" id="IPR005871">
    <property type="entry name" value="Photo_RC_L"/>
</dbReference>
<dbReference type="InterPro" id="IPR000484">
    <property type="entry name" value="Photo_RC_L/M"/>
</dbReference>
<dbReference type="InterPro" id="IPR055265">
    <property type="entry name" value="Photo_RC_L/M_CS"/>
</dbReference>
<dbReference type="NCBIfam" id="TIGR01157">
    <property type="entry name" value="pufL"/>
    <property type="match status" value="1"/>
</dbReference>
<dbReference type="Pfam" id="PF00124">
    <property type="entry name" value="Photo_RC"/>
    <property type="match status" value="1"/>
</dbReference>
<dbReference type="PRINTS" id="PR00256">
    <property type="entry name" value="REACTNCENTRE"/>
</dbReference>
<dbReference type="SUPFAM" id="SSF81483">
    <property type="entry name" value="Bacterial photosystem II reaction centre, L and M subunits"/>
    <property type="match status" value="1"/>
</dbReference>
<dbReference type="PROSITE" id="PS00244">
    <property type="entry name" value="REACTION_CENTER"/>
    <property type="match status" value="1"/>
</dbReference>
<feature type="chain" id="PRO_0000090402" description="Reaction center protein L chain">
    <location>
        <begin position="1"/>
        <end position="283"/>
    </location>
</feature>
<feature type="transmembrane region" description="Helical" evidence="1">
    <location>
        <begin position="33"/>
        <end position="56"/>
    </location>
</feature>
<feature type="transmembrane region" description="Helical" evidence="1">
    <location>
        <begin position="85"/>
        <end position="113"/>
    </location>
</feature>
<feature type="transmembrane region" description="Helical" evidence="1">
    <location>
        <begin position="116"/>
        <end position="141"/>
    </location>
</feature>
<feature type="transmembrane region" description="Helical" evidence="1">
    <location>
        <begin position="171"/>
        <end position="200"/>
    </location>
</feature>
<feature type="transmembrane region" description="Helical" evidence="1">
    <location>
        <begin position="226"/>
        <end position="252"/>
    </location>
</feature>
<feature type="binding site" description="axial binding residue">
    <location>
        <position position="154"/>
    </location>
    <ligand>
        <name>(7R,8Z)-bacteriochlorophyll b</name>
        <dbReference type="ChEBI" id="CHEBI:30034"/>
    </ligand>
    <ligandPart>
        <name>Mg</name>
        <dbReference type="ChEBI" id="CHEBI:25107"/>
    </ligandPart>
</feature>
<feature type="binding site" description="axial binding residue" evidence="1">
    <location>
        <position position="174"/>
    </location>
    <ligand>
        <name>(7R,8Z)-bacteriochlorophyll b</name>
        <dbReference type="ChEBI" id="CHEBI:30034"/>
    </ligand>
    <ligandPart>
        <name>Mg</name>
        <dbReference type="ChEBI" id="CHEBI:25107"/>
    </ligandPart>
</feature>
<feature type="binding site" evidence="1">
    <location>
        <position position="191"/>
    </location>
    <ligand>
        <name>Fe cation</name>
        <dbReference type="ChEBI" id="CHEBI:24875"/>
    </ligand>
</feature>
<feature type="binding site" evidence="1">
    <location>
        <position position="217"/>
    </location>
    <ligand>
        <name>a ubiquinone</name>
        <dbReference type="ChEBI" id="CHEBI:16389"/>
    </ligand>
</feature>
<feature type="binding site" evidence="1">
    <location>
        <position position="231"/>
    </location>
    <ligand>
        <name>Fe cation</name>
        <dbReference type="ChEBI" id="CHEBI:24875"/>
    </ligand>
</feature>
<name>RCEL_ROSDO</name>